<gene>
    <name evidence="1" type="primary">rplM</name>
    <name type="ordered locus">PST_1061</name>
</gene>
<proteinExistence type="inferred from homology"/>
<protein>
    <recommendedName>
        <fullName evidence="1">Large ribosomal subunit protein uL13</fullName>
    </recommendedName>
    <alternativeName>
        <fullName evidence="2">50S ribosomal protein L13</fullName>
    </alternativeName>
</protein>
<reference key="1">
    <citation type="journal article" date="2008" name="Proc. Natl. Acad. Sci. U.S.A.">
        <title>Nitrogen fixation island and rhizosphere competence traits in the genome of root-associated Pseudomonas stutzeri A1501.</title>
        <authorList>
            <person name="Yan Y."/>
            <person name="Yang J."/>
            <person name="Dou Y."/>
            <person name="Chen M."/>
            <person name="Ping S."/>
            <person name="Peng J."/>
            <person name="Lu W."/>
            <person name="Zhang W."/>
            <person name="Yao Z."/>
            <person name="Li H."/>
            <person name="Liu W."/>
            <person name="He S."/>
            <person name="Geng L."/>
            <person name="Zhang X."/>
            <person name="Yang F."/>
            <person name="Yu H."/>
            <person name="Zhan Y."/>
            <person name="Li D."/>
            <person name="Lin Z."/>
            <person name="Wang Y."/>
            <person name="Elmerich C."/>
            <person name="Lin M."/>
            <person name="Jin Q."/>
        </authorList>
    </citation>
    <scope>NUCLEOTIDE SEQUENCE [LARGE SCALE GENOMIC DNA]</scope>
    <source>
        <strain>A1501</strain>
    </source>
</reference>
<comment type="function">
    <text evidence="1">This protein is one of the early assembly proteins of the 50S ribosomal subunit, although it is not seen to bind rRNA by itself. It is important during the early stages of 50S assembly.</text>
</comment>
<comment type="subunit">
    <text evidence="1">Part of the 50S ribosomal subunit.</text>
</comment>
<comment type="similarity">
    <text evidence="1">Belongs to the universal ribosomal protein uL13 family.</text>
</comment>
<organism>
    <name type="scientific">Stutzerimonas stutzeri (strain A1501)</name>
    <name type="common">Pseudomonas stutzeri</name>
    <dbReference type="NCBI Taxonomy" id="379731"/>
    <lineage>
        <taxon>Bacteria</taxon>
        <taxon>Pseudomonadati</taxon>
        <taxon>Pseudomonadota</taxon>
        <taxon>Gammaproteobacteria</taxon>
        <taxon>Pseudomonadales</taxon>
        <taxon>Pseudomonadaceae</taxon>
        <taxon>Stutzerimonas</taxon>
    </lineage>
</organism>
<evidence type="ECO:0000255" key="1">
    <source>
        <dbReference type="HAMAP-Rule" id="MF_01366"/>
    </source>
</evidence>
<evidence type="ECO:0000305" key="2"/>
<feature type="chain" id="PRO_1000055448" description="Large ribosomal subunit protein uL13">
    <location>
        <begin position="1"/>
        <end position="142"/>
    </location>
</feature>
<dbReference type="EMBL" id="CP000304">
    <property type="protein sequence ID" value="ABP78758.1"/>
    <property type="molecule type" value="Genomic_DNA"/>
</dbReference>
<dbReference type="RefSeq" id="WP_003287302.1">
    <property type="nucleotide sequence ID" value="NC_009434.1"/>
</dbReference>
<dbReference type="SMR" id="A4VIF7"/>
<dbReference type="GeneID" id="66820213"/>
<dbReference type="KEGG" id="psa:PST_1061"/>
<dbReference type="eggNOG" id="COG0102">
    <property type="taxonomic scope" value="Bacteria"/>
</dbReference>
<dbReference type="HOGENOM" id="CLU_082184_2_2_6"/>
<dbReference type="Proteomes" id="UP000000233">
    <property type="component" value="Chromosome"/>
</dbReference>
<dbReference type="GO" id="GO:0022625">
    <property type="term" value="C:cytosolic large ribosomal subunit"/>
    <property type="evidence" value="ECO:0007669"/>
    <property type="project" value="TreeGrafter"/>
</dbReference>
<dbReference type="GO" id="GO:0003729">
    <property type="term" value="F:mRNA binding"/>
    <property type="evidence" value="ECO:0007669"/>
    <property type="project" value="TreeGrafter"/>
</dbReference>
<dbReference type="GO" id="GO:0003735">
    <property type="term" value="F:structural constituent of ribosome"/>
    <property type="evidence" value="ECO:0007669"/>
    <property type="project" value="InterPro"/>
</dbReference>
<dbReference type="GO" id="GO:0017148">
    <property type="term" value="P:negative regulation of translation"/>
    <property type="evidence" value="ECO:0007669"/>
    <property type="project" value="TreeGrafter"/>
</dbReference>
<dbReference type="GO" id="GO:0006412">
    <property type="term" value="P:translation"/>
    <property type="evidence" value="ECO:0007669"/>
    <property type="project" value="UniProtKB-UniRule"/>
</dbReference>
<dbReference type="CDD" id="cd00392">
    <property type="entry name" value="Ribosomal_L13"/>
    <property type="match status" value="1"/>
</dbReference>
<dbReference type="FunFam" id="3.90.1180.10:FF:000001">
    <property type="entry name" value="50S ribosomal protein L13"/>
    <property type="match status" value="1"/>
</dbReference>
<dbReference type="Gene3D" id="3.90.1180.10">
    <property type="entry name" value="Ribosomal protein L13"/>
    <property type="match status" value="1"/>
</dbReference>
<dbReference type="HAMAP" id="MF_01366">
    <property type="entry name" value="Ribosomal_uL13"/>
    <property type="match status" value="1"/>
</dbReference>
<dbReference type="InterPro" id="IPR005822">
    <property type="entry name" value="Ribosomal_uL13"/>
</dbReference>
<dbReference type="InterPro" id="IPR005823">
    <property type="entry name" value="Ribosomal_uL13_bac-type"/>
</dbReference>
<dbReference type="InterPro" id="IPR023563">
    <property type="entry name" value="Ribosomal_uL13_CS"/>
</dbReference>
<dbReference type="InterPro" id="IPR036899">
    <property type="entry name" value="Ribosomal_uL13_sf"/>
</dbReference>
<dbReference type="NCBIfam" id="TIGR01066">
    <property type="entry name" value="rplM_bact"/>
    <property type="match status" value="1"/>
</dbReference>
<dbReference type="PANTHER" id="PTHR11545:SF2">
    <property type="entry name" value="LARGE RIBOSOMAL SUBUNIT PROTEIN UL13M"/>
    <property type="match status" value="1"/>
</dbReference>
<dbReference type="PANTHER" id="PTHR11545">
    <property type="entry name" value="RIBOSOMAL PROTEIN L13"/>
    <property type="match status" value="1"/>
</dbReference>
<dbReference type="Pfam" id="PF00572">
    <property type="entry name" value="Ribosomal_L13"/>
    <property type="match status" value="1"/>
</dbReference>
<dbReference type="PIRSF" id="PIRSF002181">
    <property type="entry name" value="Ribosomal_L13"/>
    <property type="match status" value="1"/>
</dbReference>
<dbReference type="SUPFAM" id="SSF52161">
    <property type="entry name" value="Ribosomal protein L13"/>
    <property type="match status" value="1"/>
</dbReference>
<dbReference type="PROSITE" id="PS00783">
    <property type="entry name" value="RIBOSOMAL_L13"/>
    <property type="match status" value="1"/>
</dbReference>
<sequence length="142" mass="15906">MKTFTAKPETVKRDWFVVDAAGQTLGRLATEIASRLRGKHKPEYTPHVDTGDYIVVINAEQVRVTGAKTSDKMYYSHSGFPGGIKSINFEKLIAKAPERVIETAVKGMLPKNPLGRDMYRKLKVYKGANHPHTAQQPQELKI</sequence>
<name>RL13_STUS1</name>
<accession>A4VIF7</accession>
<keyword id="KW-1185">Reference proteome</keyword>
<keyword id="KW-0687">Ribonucleoprotein</keyword>
<keyword id="KW-0689">Ribosomal protein</keyword>